<organism>
    <name type="scientific">Streptococcus pyogenes serotype M49 (strain NZ131)</name>
    <dbReference type="NCBI Taxonomy" id="471876"/>
    <lineage>
        <taxon>Bacteria</taxon>
        <taxon>Bacillati</taxon>
        <taxon>Bacillota</taxon>
        <taxon>Bacilli</taxon>
        <taxon>Lactobacillales</taxon>
        <taxon>Streptococcaceae</taxon>
        <taxon>Streptococcus</taxon>
    </lineage>
</organism>
<keyword id="KW-0328">Glycosyltransferase</keyword>
<keyword id="KW-0479">Metal-binding</keyword>
<keyword id="KW-0671">Queuosine biosynthesis</keyword>
<keyword id="KW-0808">Transferase</keyword>
<keyword id="KW-0819">tRNA processing</keyword>
<keyword id="KW-0862">Zinc</keyword>
<dbReference type="EC" id="2.4.2.29" evidence="1"/>
<dbReference type="EMBL" id="CP000829">
    <property type="protein sequence ID" value="ACI60525.1"/>
    <property type="molecule type" value="Genomic_DNA"/>
</dbReference>
<dbReference type="SMR" id="B5XJL3"/>
<dbReference type="KEGG" id="soz:Spy49_0181"/>
<dbReference type="HOGENOM" id="CLU_022060_0_1_9"/>
<dbReference type="UniPathway" id="UPA00392"/>
<dbReference type="Proteomes" id="UP000001039">
    <property type="component" value="Chromosome"/>
</dbReference>
<dbReference type="GO" id="GO:0005829">
    <property type="term" value="C:cytosol"/>
    <property type="evidence" value="ECO:0007669"/>
    <property type="project" value="TreeGrafter"/>
</dbReference>
<dbReference type="GO" id="GO:0046872">
    <property type="term" value="F:metal ion binding"/>
    <property type="evidence" value="ECO:0007669"/>
    <property type="project" value="UniProtKB-KW"/>
</dbReference>
<dbReference type="GO" id="GO:0008479">
    <property type="term" value="F:tRNA-guanosine(34) queuine transglycosylase activity"/>
    <property type="evidence" value="ECO:0007669"/>
    <property type="project" value="UniProtKB-UniRule"/>
</dbReference>
<dbReference type="GO" id="GO:0008616">
    <property type="term" value="P:queuosine biosynthetic process"/>
    <property type="evidence" value="ECO:0007669"/>
    <property type="project" value="UniProtKB-UniRule"/>
</dbReference>
<dbReference type="GO" id="GO:0002099">
    <property type="term" value="P:tRNA wobble guanine modification"/>
    <property type="evidence" value="ECO:0007669"/>
    <property type="project" value="TreeGrafter"/>
</dbReference>
<dbReference type="GO" id="GO:0101030">
    <property type="term" value="P:tRNA-guanine transglycosylation"/>
    <property type="evidence" value="ECO:0007669"/>
    <property type="project" value="InterPro"/>
</dbReference>
<dbReference type="FunFam" id="3.20.20.105:FF:000001">
    <property type="entry name" value="Queuine tRNA-ribosyltransferase"/>
    <property type="match status" value="1"/>
</dbReference>
<dbReference type="Gene3D" id="3.20.20.105">
    <property type="entry name" value="Queuine tRNA-ribosyltransferase-like"/>
    <property type="match status" value="1"/>
</dbReference>
<dbReference type="HAMAP" id="MF_00168">
    <property type="entry name" value="Q_tRNA_Tgt"/>
    <property type="match status" value="1"/>
</dbReference>
<dbReference type="InterPro" id="IPR050076">
    <property type="entry name" value="ArchSynthase1/Queuine_TRR"/>
</dbReference>
<dbReference type="InterPro" id="IPR004803">
    <property type="entry name" value="TGT"/>
</dbReference>
<dbReference type="InterPro" id="IPR036511">
    <property type="entry name" value="TGT-like_sf"/>
</dbReference>
<dbReference type="InterPro" id="IPR002616">
    <property type="entry name" value="tRNA_ribo_trans-like"/>
</dbReference>
<dbReference type="NCBIfam" id="TIGR00430">
    <property type="entry name" value="Q_tRNA_tgt"/>
    <property type="match status" value="1"/>
</dbReference>
<dbReference type="NCBIfam" id="TIGR00449">
    <property type="entry name" value="tgt_general"/>
    <property type="match status" value="1"/>
</dbReference>
<dbReference type="PANTHER" id="PTHR46499">
    <property type="entry name" value="QUEUINE TRNA-RIBOSYLTRANSFERASE"/>
    <property type="match status" value="1"/>
</dbReference>
<dbReference type="PANTHER" id="PTHR46499:SF1">
    <property type="entry name" value="QUEUINE TRNA-RIBOSYLTRANSFERASE"/>
    <property type="match status" value="1"/>
</dbReference>
<dbReference type="Pfam" id="PF01702">
    <property type="entry name" value="TGT"/>
    <property type="match status" value="1"/>
</dbReference>
<dbReference type="SUPFAM" id="SSF51713">
    <property type="entry name" value="tRNA-guanine transglycosylase"/>
    <property type="match status" value="1"/>
</dbReference>
<reference key="1">
    <citation type="journal article" date="2008" name="J. Bacteriol.">
        <title>Genome sequence of a nephritogenic and highly transformable M49 strain of Streptococcus pyogenes.</title>
        <authorList>
            <person name="McShan W.M."/>
            <person name="Ferretti J.J."/>
            <person name="Karasawa T."/>
            <person name="Suvorov A.N."/>
            <person name="Lin S."/>
            <person name="Qin B."/>
            <person name="Jia H."/>
            <person name="Kenton S."/>
            <person name="Najar F."/>
            <person name="Wu H."/>
            <person name="Scott J."/>
            <person name="Roe B.A."/>
            <person name="Savic D.J."/>
        </authorList>
    </citation>
    <scope>NUCLEOTIDE SEQUENCE [LARGE SCALE GENOMIC DNA]</scope>
    <source>
        <strain>NZ131</strain>
    </source>
</reference>
<proteinExistence type="inferred from homology"/>
<name>TGT_STRPZ</name>
<feature type="chain" id="PRO_1000097571" description="Queuine tRNA-ribosyltransferase">
    <location>
        <begin position="1"/>
        <end position="380"/>
    </location>
</feature>
<feature type="region of interest" description="RNA binding" evidence="1">
    <location>
        <begin position="251"/>
        <end position="257"/>
    </location>
</feature>
<feature type="region of interest" description="RNA binding; important for wobble base 34 recognition" evidence="1">
    <location>
        <begin position="275"/>
        <end position="279"/>
    </location>
</feature>
<feature type="active site" description="Proton acceptor" evidence="1">
    <location>
        <position position="96"/>
    </location>
</feature>
<feature type="active site" description="Nucleophile" evidence="1">
    <location>
        <position position="270"/>
    </location>
</feature>
<feature type="binding site" evidence="1">
    <location>
        <begin position="96"/>
        <end position="100"/>
    </location>
    <ligand>
        <name>substrate</name>
    </ligand>
</feature>
<feature type="binding site" evidence="1">
    <location>
        <position position="150"/>
    </location>
    <ligand>
        <name>substrate</name>
    </ligand>
</feature>
<feature type="binding site" evidence="1">
    <location>
        <position position="193"/>
    </location>
    <ligand>
        <name>substrate</name>
    </ligand>
</feature>
<feature type="binding site" evidence="1">
    <location>
        <position position="220"/>
    </location>
    <ligand>
        <name>substrate</name>
    </ligand>
</feature>
<feature type="binding site" evidence="1">
    <location>
        <position position="308"/>
    </location>
    <ligand>
        <name>Zn(2+)</name>
        <dbReference type="ChEBI" id="CHEBI:29105"/>
    </ligand>
</feature>
<feature type="binding site" evidence="1">
    <location>
        <position position="310"/>
    </location>
    <ligand>
        <name>Zn(2+)</name>
        <dbReference type="ChEBI" id="CHEBI:29105"/>
    </ligand>
</feature>
<feature type="binding site" evidence="1">
    <location>
        <position position="313"/>
    </location>
    <ligand>
        <name>Zn(2+)</name>
        <dbReference type="ChEBI" id="CHEBI:29105"/>
    </ligand>
</feature>
<feature type="binding site" evidence="1">
    <location>
        <position position="339"/>
    </location>
    <ligand>
        <name>Zn(2+)</name>
        <dbReference type="ChEBI" id="CHEBI:29105"/>
    </ligand>
</feature>
<evidence type="ECO:0000255" key="1">
    <source>
        <dbReference type="HAMAP-Rule" id="MF_00168"/>
    </source>
</evidence>
<gene>
    <name evidence="1" type="primary">tgt</name>
    <name type="ordered locus">Spy49_0181</name>
</gene>
<protein>
    <recommendedName>
        <fullName evidence="1">Queuine tRNA-ribosyltransferase</fullName>
        <ecNumber evidence="1">2.4.2.29</ecNumber>
    </recommendedName>
    <alternativeName>
        <fullName evidence="1">Guanine insertion enzyme</fullName>
    </alternativeName>
    <alternativeName>
        <fullName evidence="1">tRNA-guanine transglycosylase</fullName>
    </alternativeName>
</protein>
<accession>B5XJL3</accession>
<comment type="function">
    <text evidence="1">Catalyzes the base-exchange of a guanine (G) residue with the queuine precursor 7-aminomethyl-7-deazaguanine (PreQ1) at position 34 (anticodon wobble position) in tRNAs with GU(N) anticodons (tRNA-Asp, -Asn, -His and -Tyr). Catalysis occurs through a double-displacement mechanism. The nucleophile active site attacks the C1' of nucleotide 34 to detach the guanine base from the RNA, forming a covalent enzyme-RNA intermediate. The proton acceptor active site deprotonates the incoming PreQ1, allowing a nucleophilic attack on the C1' of the ribose to form the product. After dissociation, two additional enzymatic reactions on the tRNA convert PreQ1 to queuine (Q), resulting in the hypermodified nucleoside queuosine (7-(((4,5-cis-dihydroxy-2-cyclopenten-1-yl)amino)methyl)-7-deazaguanosine).</text>
</comment>
<comment type="catalytic activity">
    <reaction evidence="1">
        <text>7-aminomethyl-7-carbaguanine + guanosine(34) in tRNA = 7-aminomethyl-7-carbaguanosine(34) in tRNA + guanine</text>
        <dbReference type="Rhea" id="RHEA:24104"/>
        <dbReference type="Rhea" id="RHEA-COMP:10341"/>
        <dbReference type="Rhea" id="RHEA-COMP:10342"/>
        <dbReference type="ChEBI" id="CHEBI:16235"/>
        <dbReference type="ChEBI" id="CHEBI:58703"/>
        <dbReference type="ChEBI" id="CHEBI:74269"/>
        <dbReference type="ChEBI" id="CHEBI:82833"/>
        <dbReference type="EC" id="2.4.2.29"/>
    </reaction>
</comment>
<comment type="cofactor">
    <cofactor evidence="1">
        <name>Zn(2+)</name>
        <dbReference type="ChEBI" id="CHEBI:29105"/>
    </cofactor>
    <text evidence="1">Binds 1 zinc ion per subunit.</text>
</comment>
<comment type="pathway">
    <text evidence="1">tRNA modification; tRNA-queuosine biosynthesis.</text>
</comment>
<comment type="subunit">
    <text evidence="1">Homodimer. Within each dimer, one monomer is responsible for RNA recognition and catalysis, while the other monomer binds to the replacement base PreQ1.</text>
</comment>
<comment type="similarity">
    <text evidence="1">Belongs to the queuine tRNA-ribosyltransferase family.</text>
</comment>
<sequence>MTDYPIKYRLIKTEKHTGARLGEIITPHGTFPTPMFMPVGTQATVKTQSPEELKAIGSGIILSNTYHLWLRPGDELIARSGGLHKFMNWDQPILTDSGGFQVYSLADSRNITEEGVTFKNHLNGSKMFLSPEKAISIQNNLGSDIMMSFDECPQFYQPYDYVKKSIERTSRWAERGLKAHRRPHDQGLFGIVQGAGFEDLRRQSAADLVAMDFPGYSIGGLAVGESHEEMNAVLDFTTPLLPENKPRYLMGVGAPDSLIDGVIRGVDMFDCVLPTRIARNGTCMTSEGRLVVKNAKFAEDFTPLDHDCDCYTCQNYSRAYIRHLLKADETFGIRLTSYHNLYFLVNLMKKVRQAIMDDNLLEFRQDFLERYGYNKSNRNF</sequence>